<comment type="function">
    <text evidence="1">Complexes with metalloproteinases (such as collagenases) and irreversibly inactivates them by binding to their catalytic zinc cofactor.</text>
</comment>
<comment type="subunit">
    <text evidence="1">Interacts (via the C-terminal) with MMP2 (via the C-terminal PEX domain); the interaction inhibits the MMP2 activity.</text>
</comment>
<comment type="subcellular location">
    <subcellularLocation>
        <location>Secreted</location>
    </subcellularLocation>
</comment>
<comment type="PTM">
    <text evidence="1">The activity of TIMP2 is dependent on the presence of disulfide bonds.</text>
</comment>
<comment type="similarity">
    <text evidence="5">Belongs to the protease inhibitor I35 (TIMP) family.</text>
</comment>
<keyword id="KW-1015">Disulfide bond</keyword>
<keyword id="KW-0479">Metal-binding</keyword>
<keyword id="KW-0481">Metalloenzyme inhibitor</keyword>
<keyword id="KW-0483">Metalloprotease inhibitor</keyword>
<keyword id="KW-0646">Protease inhibitor</keyword>
<keyword id="KW-1185">Reference proteome</keyword>
<keyword id="KW-0964">Secreted</keyword>
<keyword id="KW-0732">Signal</keyword>
<keyword id="KW-0862">Zinc</keyword>
<reference key="1">
    <citation type="journal article" date="2001" name="Vet. Immunol. Immunopathol.">
        <title>Cloning of canine IL-1ra, TNFR and TIMP-2.</title>
        <authorList>
            <person name="Campbell S.E."/>
            <person name="Nasir L."/>
            <person name="Argyle D.J."/>
            <person name="Gault E.A."/>
            <person name="Duthie S."/>
            <person name="Bennett D."/>
        </authorList>
    </citation>
    <scope>NUCLEOTIDE SEQUENCE [MRNA]</scope>
</reference>
<reference key="2">
    <citation type="submission" date="1998-09" db="EMBL/GenBank/DDBJ databases">
        <title>Molecular studies of tissue inhibitors of metalloproteinases (TIMPs) in canine joints.</title>
        <authorList>
            <person name="Carter S.D."/>
            <person name="Barnes A."/>
            <person name="Clegg P.D."/>
        </authorList>
    </citation>
    <scope>NUCLEOTIDE SEQUENCE [MRNA] OF 48-138</scope>
</reference>
<reference key="3">
    <citation type="submission" date="1999-09" db="EMBL/GenBank/DDBJ databases">
        <title>Canine tissue inhibitor of matrix metalloproteinase-2 (TIMP-2).</title>
        <authorList>
            <person name="Balkin R."/>
            <person name="Fang Y."/>
            <person name="Kitchell B."/>
        </authorList>
    </citation>
    <scope>NUCLEOTIDE SEQUENCE [MRNA] OF 69-220</scope>
    <source>
        <tissue>Fibrosarcoma</tissue>
    </source>
</reference>
<dbReference type="EMBL" id="AF112115">
    <property type="protein sequence ID" value="AAF21942.1"/>
    <property type="molecule type" value="mRNA"/>
</dbReference>
<dbReference type="EMBL" id="AF095638">
    <property type="protein sequence ID" value="AAC63382.1"/>
    <property type="molecule type" value="mRNA"/>
</dbReference>
<dbReference type="EMBL" id="AF188489">
    <property type="protein sequence ID" value="AAF01049.1"/>
    <property type="molecule type" value="mRNA"/>
</dbReference>
<dbReference type="RefSeq" id="NP_001003082.1">
    <property type="nucleotide sequence ID" value="NM_001003082.1"/>
</dbReference>
<dbReference type="SMR" id="Q9TTY1"/>
<dbReference type="FunCoup" id="Q9TTY1">
    <property type="interactions" value="75"/>
</dbReference>
<dbReference type="STRING" id="9615.ENSCAFP00000035219"/>
<dbReference type="MEROPS" id="I35.002"/>
<dbReference type="PaxDb" id="9612-ENSCAFP00000035219"/>
<dbReference type="Ensembl" id="ENSCAFT00000109291.1">
    <property type="protein sequence ID" value="ENSCAFP00000068588.1"/>
    <property type="gene ID" value="ENSCAFG00000058977.1"/>
</dbReference>
<dbReference type="Ensembl" id="ENSCAFT00040005922.1">
    <property type="protein sequence ID" value="ENSCAFP00040005109.1"/>
    <property type="gene ID" value="ENSCAFG00040003116.1"/>
</dbReference>
<dbReference type="GeneID" id="403633"/>
<dbReference type="KEGG" id="cfa:403633"/>
<dbReference type="CTD" id="7077"/>
<dbReference type="eggNOG" id="KOG4745">
    <property type="taxonomic scope" value="Eukaryota"/>
</dbReference>
<dbReference type="InParanoid" id="Q9TTY1"/>
<dbReference type="OrthoDB" id="8589at33554"/>
<dbReference type="Reactome" id="R-CFA-1592389">
    <property type="pathway name" value="Activation of Matrix Metalloproteinases"/>
</dbReference>
<dbReference type="Reactome" id="R-CFA-6798695">
    <property type="pathway name" value="Neutrophil degranulation"/>
</dbReference>
<dbReference type="Reactome" id="R-CFA-9839383">
    <property type="pathway name" value="TGFBR3 PTM regulation"/>
</dbReference>
<dbReference type="Proteomes" id="UP000002254">
    <property type="component" value="Chromosome 9"/>
</dbReference>
<dbReference type="Proteomes" id="UP000694429">
    <property type="component" value="Unplaced"/>
</dbReference>
<dbReference type="Proteomes" id="UP000694542">
    <property type="component" value="Chromosome 9"/>
</dbReference>
<dbReference type="Proteomes" id="UP000805418">
    <property type="component" value="Unplaced"/>
</dbReference>
<dbReference type="GO" id="GO:0031012">
    <property type="term" value="C:extracellular matrix"/>
    <property type="evidence" value="ECO:0000318"/>
    <property type="project" value="GO_Central"/>
</dbReference>
<dbReference type="GO" id="GO:0005615">
    <property type="term" value="C:extracellular space"/>
    <property type="evidence" value="ECO:0000318"/>
    <property type="project" value="GO_Central"/>
</dbReference>
<dbReference type="GO" id="GO:0008191">
    <property type="term" value="F:metalloendopeptidase inhibitor activity"/>
    <property type="evidence" value="ECO:0000318"/>
    <property type="project" value="GO_Central"/>
</dbReference>
<dbReference type="GO" id="GO:0008270">
    <property type="term" value="F:zinc ion binding"/>
    <property type="evidence" value="ECO:0000250"/>
    <property type="project" value="UniProtKB"/>
</dbReference>
<dbReference type="GO" id="GO:0051045">
    <property type="term" value="P:negative regulation of membrane protein ectodomain proteolysis"/>
    <property type="evidence" value="ECO:0000318"/>
    <property type="project" value="GO_Central"/>
</dbReference>
<dbReference type="GO" id="GO:0034097">
    <property type="term" value="P:response to cytokine"/>
    <property type="evidence" value="ECO:0000318"/>
    <property type="project" value="GO_Central"/>
</dbReference>
<dbReference type="GO" id="GO:0009725">
    <property type="term" value="P:response to hormone"/>
    <property type="evidence" value="ECO:0000318"/>
    <property type="project" value="GO_Central"/>
</dbReference>
<dbReference type="CDD" id="cd03585">
    <property type="entry name" value="NTR_TIMP"/>
    <property type="match status" value="1"/>
</dbReference>
<dbReference type="FunFam" id="2.40.50.120:FF:000007">
    <property type="entry name" value="Metalloproteinase inhibitor 2"/>
    <property type="match status" value="1"/>
</dbReference>
<dbReference type="FunFam" id="3.90.370.10:FF:000001">
    <property type="entry name" value="Metalloproteinase inhibitor 3"/>
    <property type="match status" value="1"/>
</dbReference>
<dbReference type="Gene3D" id="2.40.50.120">
    <property type="match status" value="1"/>
</dbReference>
<dbReference type="Gene3D" id="3.90.370.10">
    <property type="entry name" value="Tissue inhibitor of metalloproteinase-1. Chain B, domain 1"/>
    <property type="match status" value="1"/>
</dbReference>
<dbReference type="InterPro" id="IPR001134">
    <property type="entry name" value="Netrin_domain"/>
</dbReference>
<dbReference type="InterPro" id="IPR001820">
    <property type="entry name" value="TIMP"/>
</dbReference>
<dbReference type="InterPro" id="IPR008993">
    <property type="entry name" value="TIMP-like_OB-fold"/>
</dbReference>
<dbReference type="InterPro" id="IPR027465">
    <property type="entry name" value="TIMP_C"/>
</dbReference>
<dbReference type="InterPro" id="IPR030490">
    <property type="entry name" value="TIMP_CS"/>
</dbReference>
<dbReference type="PANTHER" id="PTHR11844">
    <property type="entry name" value="METALLOPROTEASE INHIBITOR"/>
    <property type="match status" value="1"/>
</dbReference>
<dbReference type="PANTHER" id="PTHR11844:SF24">
    <property type="entry name" value="METALLOPROTEINASE INHIBITOR 2"/>
    <property type="match status" value="1"/>
</dbReference>
<dbReference type="Pfam" id="PF00965">
    <property type="entry name" value="TIMP"/>
    <property type="match status" value="1"/>
</dbReference>
<dbReference type="SMART" id="SM00206">
    <property type="entry name" value="NTR"/>
    <property type="match status" value="1"/>
</dbReference>
<dbReference type="SUPFAM" id="SSF50242">
    <property type="entry name" value="TIMP-like"/>
    <property type="match status" value="1"/>
</dbReference>
<dbReference type="PROSITE" id="PS50189">
    <property type="entry name" value="NTR"/>
    <property type="match status" value="1"/>
</dbReference>
<dbReference type="PROSITE" id="PS00288">
    <property type="entry name" value="TIMP"/>
    <property type="match status" value="1"/>
</dbReference>
<accession>Q9TTY1</accession>
<accession>O77804</accession>
<accession>Q9TTE9</accession>
<proteinExistence type="evidence at transcript level"/>
<evidence type="ECO:0000250" key="1"/>
<evidence type="ECO:0000250" key="2">
    <source>
        <dbReference type="UniProtKB" id="P16035"/>
    </source>
</evidence>
<evidence type="ECO:0000255" key="3"/>
<evidence type="ECO:0000255" key="4">
    <source>
        <dbReference type="PROSITE-ProRule" id="PRU00295"/>
    </source>
</evidence>
<evidence type="ECO:0000305" key="5"/>
<organism>
    <name type="scientific">Canis lupus familiaris</name>
    <name type="common">Dog</name>
    <name type="synonym">Canis familiaris</name>
    <dbReference type="NCBI Taxonomy" id="9615"/>
    <lineage>
        <taxon>Eukaryota</taxon>
        <taxon>Metazoa</taxon>
        <taxon>Chordata</taxon>
        <taxon>Craniata</taxon>
        <taxon>Vertebrata</taxon>
        <taxon>Euteleostomi</taxon>
        <taxon>Mammalia</taxon>
        <taxon>Eutheria</taxon>
        <taxon>Laurasiatheria</taxon>
        <taxon>Carnivora</taxon>
        <taxon>Caniformia</taxon>
        <taxon>Canidae</taxon>
        <taxon>Canis</taxon>
    </lineage>
</organism>
<feature type="signal peptide" evidence="3">
    <location>
        <begin position="1"/>
        <end position="26"/>
    </location>
</feature>
<feature type="chain" id="PRO_0000034332" description="Metalloproteinase inhibitor 2">
    <location>
        <begin position="27"/>
        <end position="220"/>
    </location>
</feature>
<feature type="domain" description="NTR" evidence="4">
    <location>
        <begin position="27"/>
        <end position="152"/>
    </location>
</feature>
<feature type="region of interest" description="Involved in metalloproteinase-binding" evidence="2">
    <location>
        <begin position="27"/>
        <end position="30"/>
    </location>
</feature>
<feature type="region of interest" description="Involved in metalloproteinase-binding" evidence="2">
    <location>
        <begin position="95"/>
        <end position="96"/>
    </location>
</feature>
<feature type="binding site" evidence="2">
    <location>
        <position position="27"/>
    </location>
    <ligand>
        <name>Zn(2+)</name>
        <dbReference type="ChEBI" id="CHEBI:29105"/>
        <note>ligand shared with metalloproteinase partner</note>
    </ligand>
</feature>
<feature type="site" description="Involved in metalloproteinase-binding" evidence="2">
    <location>
        <position position="40"/>
    </location>
</feature>
<feature type="site" description="Involved in metalloproteinase-binding" evidence="2">
    <location>
        <position position="61"/>
    </location>
</feature>
<feature type="site" description="Involved in metalloproteinase-binding" evidence="2">
    <location>
        <position position="67"/>
    </location>
</feature>
<feature type="disulfide bond" evidence="4">
    <location>
        <begin position="27"/>
        <end position="98"/>
    </location>
</feature>
<feature type="disulfide bond" evidence="4">
    <location>
        <begin position="29"/>
        <end position="127"/>
    </location>
</feature>
<feature type="disulfide bond" evidence="4">
    <location>
        <begin position="39"/>
        <end position="152"/>
    </location>
</feature>
<feature type="disulfide bond" evidence="4">
    <location>
        <begin position="154"/>
        <end position="201"/>
    </location>
</feature>
<feature type="disulfide bond" evidence="4">
    <location>
        <begin position="159"/>
        <end position="164"/>
    </location>
</feature>
<feature type="disulfide bond" evidence="4">
    <location>
        <begin position="172"/>
        <end position="193"/>
    </location>
</feature>
<feature type="sequence conflict" description="In Ref. 3; AAF01049." evidence="5" ref="3">
    <original>C</original>
    <variation>R</variation>
    <location>
        <position position="154"/>
    </location>
</feature>
<sequence>MGAAARSLRLALGLLLLATLPRPADACSCSPVHPQQAFCNADVVIRAKAVSVKEVDSGNDIYGNPIKRIQYEIKQIKMFKGPDKDIEFIYTAPSSAVCGVSLDIGGKKEYLIAGKAEGNGKMHITLCDFIVPWDTLSSTQKKSLNHRYQMGCECKITRCPMIPCYISSPDECLWMDWVTEKSINGHQAKFFACIKRSDGSCAWYRGAAPPKQEFLDIEDP</sequence>
<protein>
    <recommendedName>
        <fullName>Metalloproteinase inhibitor 2</fullName>
    </recommendedName>
    <alternativeName>
        <fullName>Tissue inhibitor of metalloproteinases 2</fullName>
        <shortName>TIMP-2</shortName>
    </alternativeName>
</protein>
<gene>
    <name type="primary">TIMP2</name>
</gene>
<name>TIMP2_CANLF</name>